<comment type="subcellular location">
    <subcellularLocation>
        <location evidence="1">Cell inner membrane</location>
        <topology evidence="1">Multi-pass membrane protein</topology>
    </subcellularLocation>
</comment>
<comment type="similarity">
    <text evidence="1">Belongs to the UPF0060 family.</text>
</comment>
<gene>
    <name type="ordered locus">CC_1976</name>
</gene>
<dbReference type="EMBL" id="AE005673">
    <property type="protein sequence ID" value="AAK23951.1"/>
    <property type="molecule type" value="Genomic_DNA"/>
</dbReference>
<dbReference type="PIR" id="C87494">
    <property type="entry name" value="C87494"/>
</dbReference>
<dbReference type="RefSeq" id="NP_420783.1">
    <property type="nucleotide sequence ID" value="NC_002696.2"/>
</dbReference>
<dbReference type="RefSeq" id="WP_010919842.1">
    <property type="nucleotide sequence ID" value="NC_002696.2"/>
</dbReference>
<dbReference type="SMR" id="Q9A6V7"/>
<dbReference type="STRING" id="190650.CC_1976"/>
<dbReference type="EnsemblBacteria" id="AAK23951">
    <property type="protein sequence ID" value="AAK23951"/>
    <property type="gene ID" value="CC_1976"/>
</dbReference>
<dbReference type="KEGG" id="ccr:CC_1976"/>
<dbReference type="PATRIC" id="fig|190650.5.peg.1994"/>
<dbReference type="eggNOG" id="COG1742">
    <property type="taxonomic scope" value="Bacteria"/>
</dbReference>
<dbReference type="HOGENOM" id="CLU_117653_1_0_5"/>
<dbReference type="BioCyc" id="CAULO:CC1976-MONOMER"/>
<dbReference type="Proteomes" id="UP000001816">
    <property type="component" value="Chromosome"/>
</dbReference>
<dbReference type="GO" id="GO:0005886">
    <property type="term" value="C:plasma membrane"/>
    <property type="evidence" value="ECO:0007669"/>
    <property type="project" value="UniProtKB-SubCell"/>
</dbReference>
<dbReference type="HAMAP" id="MF_00010">
    <property type="entry name" value="UPF0060"/>
    <property type="match status" value="1"/>
</dbReference>
<dbReference type="InterPro" id="IPR003844">
    <property type="entry name" value="UPF0060"/>
</dbReference>
<dbReference type="NCBIfam" id="NF002586">
    <property type="entry name" value="PRK02237.1"/>
    <property type="match status" value="1"/>
</dbReference>
<dbReference type="PANTHER" id="PTHR36116">
    <property type="entry name" value="UPF0060 MEMBRANE PROTEIN YNFA"/>
    <property type="match status" value="1"/>
</dbReference>
<dbReference type="PANTHER" id="PTHR36116:SF1">
    <property type="entry name" value="UPF0060 MEMBRANE PROTEIN YNFA"/>
    <property type="match status" value="1"/>
</dbReference>
<dbReference type="Pfam" id="PF02694">
    <property type="entry name" value="UPF0060"/>
    <property type="match status" value="1"/>
</dbReference>
<dbReference type="SUPFAM" id="SSF103481">
    <property type="entry name" value="Multidrug resistance efflux transporter EmrE"/>
    <property type="match status" value="1"/>
</dbReference>
<accession>Q9A6V7</accession>
<proteinExistence type="inferred from homology"/>
<sequence length="108" mass="11402">MTSFAIYVLAALAEIAGCFGFWAWLRLGKSPAWAVLGVLSLVIFALLLTRIEAGAAGRAFAAYGGVYIIASLAWMQVVEGARPDRWDLIGGVICLAGAALILFGPRTN</sequence>
<feature type="chain" id="PRO_0000162327" description="UPF0060 membrane protein CC_1976">
    <location>
        <begin position="1"/>
        <end position="108"/>
    </location>
</feature>
<feature type="transmembrane region" description="Helical" evidence="1">
    <location>
        <begin position="4"/>
        <end position="24"/>
    </location>
</feature>
<feature type="transmembrane region" description="Helical" evidence="1">
    <location>
        <begin position="27"/>
        <end position="47"/>
    </location>
</feature>
<feature type="transmembrane region" description="Helical" evidence="1">
    <location>
        <begin position="59"/>
        <end position="79"/>
    </location>
</feature>
<feature type="transmembrane region" description="Helical" evidence="1">
    <location>
        <begin position="85"/>
        <end position="105"/>
    </location>
</feature>
<reference key="1">
    <citation type="journal article" date="2001" name="Proc. Natl. Acad. Sci. U.S.A.">
        <title>Complete genome sequence of Caulobacter crescentus.</title>
        <authorList>
            <person name="Nierman W.C."/>
            <person name="Feldblyum T.V."/>
            <person name="Laub M.T."/>
            <person name="Paulsen I.T."/>
            <person name="Nelson K.E."/>
            <person name="Eisen J.A."/>
            <person name="Heidelberg J.F."/>
            <person name="Alley M.R.K."/>
            <person name="Ohta N."/>
            <person name="Maddock J.R."/>
            <person name="Potocka I."/>
            <person name="Nelson W.C."/>
            <person name="Newton A."/>
            <person name="Stephens C."/>
            <person name="Phadke N.D."/>
            <person name="Ely B."/>
            <person name="DeBoy R.T."/>
            <person name="Dodson R.J."/>
            <person name="Durkin A.S."/>
            <person name="Gwinn M.L."/>
            <person name="Haft D.H."/>
            <person name="Kolonay J.F."/>
            <person name="Smit J."/>
            <person name="Craven M.B."/>
            <person name="Khouri H.M."/>
            <person name="Shetty J."/>
            <person name="Berry K.J."/>
            <person name="Utterback T.R."/>
            <person name="Tran K."/>
            <person name="Wolf A.M."/>
            <person name="Vamathevan J.J."/>
            <person name="Ermolaeva M.D."/>
            <person name="White O."/>
            <person name="Salzberg S.L."/>
            <person name="Venter J.C."/>
            <person name="Shapiro L."/>
            <person name="Fraser C.M."/>
        </authorList>
    </citation>
    <scope>NUCLEOTIDE SEQUENCE [LARGE SCALE GENOMIC DNA]</scope>
    <source>
        <strain>ATCC 19089 / CIP 103742 / CB 15</strain>
    </source>
</reference>
<organism>
    <name type="scientific">Caulobacter vibrioides (strain ATCC 19089 / CIP 103742 / CB 15)</name>
    <name type="common">Caulobacter crescentus</name>
    <dbReference type="NCBI Taxonomy" id="190650"/>
    <lineage>
        <taxon>Bacteria</taxon>
        <taxon>Pseudomonadati</taxon>
        <taxon>Pseudomonadota</taxon>
        <taxon>Alphaproteobacteria</taxon>
        <taxon>Caulobacterales</taxon>
        <taxon>Caulobacteraceae</taxon>
        <taxon>Caulobacter</taxon>
    </lineage>
</organism>
<evidence type="ECO:0000255" key="1">
    <source>
        <dbReference type="HAMAP-Rule" id="MF_00010"/>
    </source>
</evidence>
<keyword id="KW-0997">Cell inner membrane</keyword>
<keyword id="KW-1003">Cell membrane</keyword>
<keyword id="KW-0472">Membrane</keyword>
<keyword id="KW-1185">Reference proteome</keyword>
<keyword id="KW-0812">Transmembrane</keyword>
<keyword id="KW-1133">Transmembrane helix</keyword>
<name>Y1976_CAUVC</name>
<protein>
    <recommendedName>
        <fullName evidence="1">UPF0060 membrane protein CC_1976</fullName>
    </recommendedName>
</protein>